<comment type="function">
    <text evidence="1">General (non sugar-specific) component of the phosphoenolpyruvate-dependent sugar phosphotransferase system (sugar PTS). This major carbohydrate active-transport system catalyzes the phosphorylation of incoming sugar substrates concomitantly with their translocation across the cell membrane. The phosphoryl group from phosphoenolpyruvate (PEP) is transferred to the phosphoryl carrier protein HPr by enzyme I. Phospho-HPr then transfers it to the PTS EIIA domain.</text>
</comment>
<comment type="function">
    <text evidence="1">P-Ser-HPr interacts with the catabolite control protein A (CcpA), forming a complex that binds to DNA at the catabolite response elements cre, operator sites preceding a large number of catabolite-regulated genes. Thus, P-Ser-HPr is a corepressor in carbon catabolite repression (CCR), a mechanism that allows bacteria to coordinate and optimize the utilization of available carbon sources. P-Ser-HPr also plays a role in inducer exclusion, in which it probably interacts with several non-PTS permeases and inhibits their transport activity (By similarity).</text>
</comment>
<comment type="activity regulation">
    <text evidence="1">Phosphorylation on Ser-46 inhibits the phosphoryl transfer from enzyme I to HPr.</text>
</comment>
<comment type="subcellular location">
    <subcellularLocation>
        <location evidence="1">Cytoplasm</location>
    </subcellularLocation>
</comment>
<comment type="similarity">
    <text evidence="5">Belongs to the HPr family.</text>
</comment>
<feature type="chain" id="PRO_0000107839" description="Phosphocarrier protein HPr">
    <location>
        <begin position="1"/>
        <end position="88"/>
    </location>
</feature>
<feature type="domain" description="HPr" evidence="2">
    <location>
        <begin position="1"/>
        <end position="88"/>
    </location>
</feature>
<feature type="active site" description="Pros-phosphohistidine intermediate" evidence="2">
    <location>
        <position position="15"/>
    </location>
</feature>
<feature type="modified residue" description="Phosphoserine" evidence="1">
    <location>
        <position position="12"/>
    </location>
</feature>
<feature type="modified residue" description="Phosphoserine; by HPrK/P" evidence="2 3 4">
    <location>
        <position position="46"/>
    </location>
</feature>
<feature type="strand" evidence="7">
    <location>
        <begin position="3"/>
        <end position="8"/>
    </location>
</feature>
<feature type="helix" evidence="7">
    <location>
        <begin position="16"/>
        <end position="27"/>
    </location>
</feature>
<feature type="strand" evidence="7">
    <location>
        <begin position="29"/>
        <end position="37"/>
    </location>
</feature>
<feature type="strand" evidence="7">
    <location>
        <begin position="40"/>
        <end position="43"/>
    </location>
</feature>
<feature type="helix" evidence="7">
    <location>
        <begin position="47"/>
        <end position="52"/>
    </location>
</feature>
<feature type="strand" evidence="7">
    <location>
        <begin position="60"/>
        <end position="67"/>
    </location>
</feature>
<feature type="helix" evidence="7">
    <location>
        <begin position="70"/>
        <end position="83"/>
    </location>
</feature>
<feature type="strand" evidence="6">
    <location>
        <begin position="86"/>
        <end position="88"/>
    </location>
</feature>
<dbReference type="EMBL" id="AJ005075">
    <property type="protein sequence ID" value="CAA06331.1"/>
    <property type="molecule type" value="Genomic_DNA"/>
</dbReference>
<dbReference type="RefSeq" id="WP_013056011.1">
    <property type="nucleotide sequence ID" value="NZ_WWFB01000001.1"/>
</dbReference>
<dbReference type="PDB" id="1RZR">
    <property type="method" value="X-ray"/>
    <property type="resolution" value="2.80 A"/>
    <property type="chains" value="L/S/T/Y=1-88"/>
</dbReference>
<dbReference type="PDB" id="2NZU">
    <property type="method" value="X-ray"/>
    <property type="resolution" value="2.50 A"/>
    <property type="chains" value="L=1-88"/>
</dbReference>
<dbReference type="PDB" id="2NZV">
    <property type="method" value="X-ray"/>
    <property type="resolution" value="3.00 A"/>
    <property type="chains" value="L=1-88"/>
</dbReference>
<dbReference type="PDB" id="2OEN">
    <property type="method" value="X-ray"/>
    <property type="resolution" value="3.17 A"/>
    <property type="chains" value="L=1-88"/>
</dbReference>
<dbReference type="PDBsum" id="1RZR"/>
<dbReference type="PDBsum" id="2NZU"/>
<dbReference type="PDBsum" id="2NZV"/>
<dbReference type="PDBsum" id="2OEN"/>
<dbReference type="SMR" id="O69250"/>
<dbReference type="iPTMnet" id="O69250"/>
<dbReference type="OMA" id="AEVWVTR"/>
<dbReference type="EvolutionaryTrace" id="O69250"/>
<dbReference type="PRO" id="PR:O69250"/>
<dbReference type="GO" id="GO:0005737">
    <property type="term" value="C:cytoplasm"/>
    <property type="evidence" value="ECO:0007669"/>
    <property type="project" value="UniProtKB-SubCell"/>
</dbReference>
<dbReference type="GO" id="GO:0009401">
    <property type="term" value="P:phosphoenolpyruvate-dependent sugar phosphotransferase system"/>
    <property type="evidence" value="ECO:0007669"/>
    <property type="project" value="UniProtKB-KW"/>
</dbReference>
<dbReference type="CDD" id="cd00367">
    <property type="entry name" value="PTS-HPr_like"/>
    <property type="match status" value="1"/>
</dbReference>
<dbReference type="FunFam" id="3.30.1340.10:FF:000003">
    <property type="entry name" value="Phosphocarrier protein HPr"/>
    <property type="match status" value="1"/>
</dbReference>
<dbReference type="Gene3D" id="3.30.1340.10">
    <property type="entry name" value="HPr-like"/>
    <property type="match status" value="1"/>
</dbReference>
<dbReference type="InterPro" id="IPR050399">
    <property type="entry name" value="HPr"/>
</dbReference>
<dbReference type="InterPro" id="IPR000032">
    <property type="entry name" value="HPr-like"/>
</dbReference>
<dbReference type="InterPro" id="IPR035895">
    <property type="entry name" value="HPr-like_sf"/>
</dbReference>
<dbReference type="InterPro" id="IPR001020">
    <property type="entry name" value="PTS_HPr_His_P_site"/>
</dbReference>
<dbReference type="InterPro" id="IPR002114">
    <property type="entry name" value="PTS_HPr_Ser_P_site"/>
</dbReference>
<dbReference type="NCBIfam" id="NF010352">
    <property type="entry name" value="PRK13780.1"/>
    <property type="match status" value="1"/>
</dbReference>
<dbReference type="NCBIfam" id="TIGR01003">
    <property type="entry name" value="PTS_HPr_family"/>
    <property type="match status" value="1"/>
</dbReference>
<dbReference type="PANTHER" id="PTHR33705">
    <property type="entry name" value="PHOSPHOCARRIER PROTEIN HPR"/>
    <property type="match status" value="1"/>
</dbReference>
<dbReference type="PANTHER" id="PTHR33705:SF2">
    <property type="entry name" value="PHOSPHOCARRIER PROTEIN NPR"/>
    <property type="match status" value="1"/>
</dbReference>
<dbReference type="Pfam" id="PF00381">
    <property type="entry name" value="PTS-HPr"/>
    <property type="match status" value="1"/>
</dbReference>
<dbReference type="PRINTS" id="PR00107">
    <property type="entry name" value="PHOSPHOCPHPR"/>
</dbReference>
<dbReference type="SUPFAM" id="SSF55594">
    <property type="entry name" value="HPr-like"/>
    <property type="match status" value="1"/>
</dbReference>
<dbReference type="PROSITE" id="PS51350">
    <property type="entry name" value="PTS_HPR_DOM"/>
    <property type="match status" value="1"/>
</dbReference>
<dbReference type="PROSITE" id="PS00369">
    <property type="entry name" value="PTS_HPR_HIS"/>
    <property type="match status" value="1"/>
</dbReference>
<dbReference type="PROSITE" id="PS00589">
    <property type="entry name" value="PTS_HPR_SER"/>
    <property type="match status" value="1"/>
</dbReference>
<reference key="1">
    <citation type="submission" date="1998-03" db="EMBL/GenBank/DDBJ databases">
        <title>Sequence of ptsH and ptsI of Bacillus megaterium.</title>
        <authorList>
            <person name="Wagner A."/>
            <person name="Kuester E."/>
            <person name="Hillen W."/>
        </authorList>
    </citation>
    <scope>NUCLEOTIDE SEQUENCE [GENOMIC DNA]</scope>
    <source>
        <strain>WH348</strain>
    </source>
</reference>
<reference key="2">
    <citation type="journal article" date="2004" name="Cell">
        <title>Structural basis for allosteric control of the transcription regulator CcpA by the phosphoprotein HPr-Ser46-P.</title>
        <authorList>
            <person name="Schumacher M.A."/>
            <person name="Allen G.S."/>
            <person name="Diel M."/>
            <person name="Seidel G."/>
            <person name="Hillen W."/>
            <person name="Brennan R.G."/>
        </authorList>
    </citation>
    <scope>X-RAY CRYSTALLOGRAPHY (2.8 ANGSTROMS)</scope>
    <scope>PHOSPHORYLATION AT SER-46</scope>
</reference>
<reference key="3">
    <citation type="journal article" date="2007" name="J. Mol. Biol.">
        <title>Structural mechanism for the fine-tuning of CcpA function by the small molecule effectors glucose 6-phosphate and fructose 1,6-bisphosphate.</title>
        <authorList>
            <person name="Schumacher M.A."/>
            <person name="Seidel G."/>
            <person name="Hillen W."/>
            <person name="Brennan R.G."/>
        </authorList>
    </citation>
    <scope>X-RAY CRYSTALLOGRAPHY (2.5 ANGSTROMS)</scope>
    <scope>PHOSPHORYLATION AT SER-46</scope>
</reference>
<name>PTHP_PRIMG</name>
<gene>
    <name type="primary">ptsH</name>
</gene>
<accession>O69250</accession>
<organism>
    <name type="scientific">Priestia megaterium</name>
    <name type="common">Bacillus megaterium</name>
    <dbReference type="NCBI Taxonomy" id="1404"/>
    <lineage>
        <taxon>Bacteria</taxon>
        <taxon>Bacillati</taxon>
        <taxon>Bacillota</taxon>
        <taxon>Bacilli</taxon>
        <taxon>Bacillales</taxon>
        <taxon>Bacillaceae</taxon>
        <taxon>Priestia</taxon>
    </lineage>
</organism>
<evidence type="ECO:0000250" key="1"/>
<evidence type="ECO:0000255" key="2">
    <source>
        <dbReference type="PROSITE-ProRule" id="PRU00681"/>
    </source>
</evidence>
<evidence type="ECO:0000269" key="3">
    <source>
    </source>
</evidence>
<evidence type="ECO:0000269" key="4">
    <source>
    </source>
</evidence>
<evidence type="ECO:0000305" key="5"/>
<evidence type="ECO:0007829" key="6">
    <source>
        <dbReference type="PDB" id="1RZR"/>
    </source>
</evidence>
<evidence type="ECO:0007829" key="7">
    <source>
        <dbReference type="PDB" id="2NZU"/>
    </source>
</evidence>
<keyword id="KW-0002">3D-structure</keyword>
<keyword id="KW-0963">Cytoplasm</keyword>
<keyword id="KW-0597">Phosphoprotein</keyword>
<keyword id="KW-0598">Phosphotransferase system</keyword>
<keyword id="KW-0762">Sugar transport</keyword>
<keyword id="KW-0804">Transcription</keyword>
<keyword id="KW-0805">Transcription regulation</keyword>
<keyword id="KW-0813">Transport</keyword>
<sequence>MAQKTFTVTADSGIHARPATTLVQAASKFDSDINLEFNGKTVNLKSIMGVMSLGIQKGATITISAEGSDEADALAALEDTMSKEGLGE</sequence>
<proteinExistence type="evidence at protein level"/>
<protein>
    <recommendedName>
        <fullName>Phosphocarrier protein HPr</fullName>
    </recommendedName>
    <alternativeName>
        <fullName>Histidine-containing protein</fullName>
    </alternativeName>
</protein>